<gene>
    <name type="ORF">CBG14627</name>
</gene>
<organism>
    <name type="scientific">Caenorhabditis briggsae</name>
    <dbReference type="NCBI Taxonomy" id="6238"/>
    <lineage>
        <taxon>Eukaryota</taxon>
        <taxon>Metazoa</taxon>
        <taxon>Ecdysozoa</taxon>
        <taxon>Nematoda</taxon>
        <taxon>Chromadorea</taxon>
        <taxon>Rhabditida</taxon>
        <taxon>Rhabditina</taxon>
        <taxon>Rhabditomorpha</taxon>
        <taxon>Rhabditoidea</taxon>
        <taxon>Rhabditidae</taxon>
        <taxon>Peloderinae</taxon>
        <taxon>Caenorhabditis</taxon>
    </lineage>
</organism>
<dbReference type="EMBL" id="HE600983">
    <property type="protein sequence ID" value="CAP33089.3"/>
    <property type="molecule type" value="Genomic_DNA"/>
</dbReference>
<dbReference type="RefSeq" id="XP_045095467.1">
    <property type="nucleotide sequence ID" value="XM_045239698.1"/>
</dbReference>
<dbReference type="SMR" id="Q618K0"/>
<dbReference type="FunCoup" id="Q618K0">
    <property type="interactions" value="997"/>
</dbReference>
<dbReference type="STRING" id="6238.Q618K0"/>
<dbReference type="GeneID" id="8586646"/>
<dbReference type="WormBase" id="CBG14627">
    <property type="protein sequence ID" value="CBP49270"/>
    <property type="gene ID" value="WBGene00035059"/>
</dbReference>
<dbReference type="eggNOG" id="KOG3940">
    <property type="taxonomic scope" value="Eukaryota"/>
</dbReference>
<dbReference type="HOGENOM" id="CLU_074438_0_0_1"/>
<dbReference type="InParanoid" id="Q618K0"/>
<dbReference type="OMA" id="NWRERHG"/>
<dbReference type="Proteomes" id="UP000008549">
    <property type="component" value="Unassembled WGS sequence"/>
</dbReference>
<dbReference type="GO" id="GO:0008270">
    <property type="term" value="F:zinc ion binding"/>
    <property type="evidence" value="ECO:0007669"/>
    <property type="project" value="UniProtKB-KW"/>
</dbReference>
<dbReference type="Gene3D" id="3.30.160.60">
    <property type="entry name" value="Classic Zinc Finger"/>
    <property type="match status" value="1"/>
</dbReference>
<dbReference type="InterPro" id="IPR026319">
    <property type="entry name" value="ZC2HC1A/B-like"/>
</dbReference>
<dbReference type="InterPro" id="IPR049899">
    <property type="entry name" value="Znf_C2HC_C3H"/>
</dbReference>
<dbReference type="PANTHER" id="PTHR13555">
    <property type="entry name" value="C2H2 ZINC FINGER CGI-62-RELATED"/>
    <property type="match status" value="1"/>
</dbReference>
<dbReference type="PANTHER" id="PTHR13555:SF25">
    <property type="entry name" value="ZINC FINGER C2HC DOMAIN-CONTAINING PROTEIN 1A"/>
    <property type="match status" value="1"/>
</dbReference>
<dbReference type="Pfam" id="PF13913">
    <property type="entry name" value="zf-C2HC_2"/>
    <property type="match status" value="2"/>
</dbReference>
<dbReference type="PROSITE" id="PS52027">
    <property type="entry name" value="ZF_C2HC_C3H"/>
    <property type="match status" value="2"/>
</dbReference>
<comment type="cofactor">
    <cofactor evidence="1">
        <name>Zn(2+)</name>
        <dbReference type="ChEBI" id="CHEBI:29105"/>
    </cofactor>
</comment>
<comment type="similarity">
    <text evidence="3">Belongs to the ZC2HC1 family.</text>
</comment>
<reference key="1">
    <citation type="journal article" date="2003" name="PLoS Biol.">
        <title>The genome sequence of Caenorhabditis briggsae: a platform for comparative genomics.</title>
        <authorList>
            <person name="Stein L.D."/>
            <person name="Bao Z."/>
            <person name="Blasiar D."/>
            <person name="Blumenthal T."/>
            <person name="Brent M.R."/>
            <person name="Chen N."/>
            <person name="Chinwalla A."/>
            <person name="Clarke L."/>
            <person name="Clee C."/>
            <person name="Coghlan A."/>
            <person name="Coulson A."/>
            <person name="D'Eustachio P."/>
            <person name="Fitch D.H.A."/>
            <person name="Fulton L.A."/>
            <person name="Fulton R.E."/>
            <person name="Griffiths-Jones S."/>
            <person name="Harris T.W."/>
            <person name="Hillier L.W."/>
            <person name="Kamath R."/>
            <person name="Kuwabara P.E."/>
            <person name="Mardis E.R."/>
            <person name="Marra M.A."/>
            <person name="Miner T.L."/>
            <person name="Minx P."/>
            <person name="Mullikin J.C."/>
            <person name="Plumb R.W."/>
            <person name="Rogers J."/>
            <person name="Schein J.E."/>
            <person name="Sohrmann M."/>
            <person name="Spieth J."/>
            <person name="Stajich J.E."/>
            <person name="Wei C."/>
            <person name="Willey D."/>
            <person name="Wilson R.K."/>
            <person name="Durbin R.M."/>
            <person name="Waterston R.H."/>
        </authorList>
    </citation>
    <scope>NUCLEOTIDE SEQUENCE [LARGE SCALE GENOMIC DNA]</scope>
    <source>
        <strain>AF16</strain>
    </source>
</reference>
<keyword id="KW-0479">Metal-binding</keyword>
<keyword id="KW-1185">Reference proteome</keyword>
<keyword id="KW-0677">Repeat</keyword>
<keyword id="KW-0862">Zinc</keyword>
<keyword id="KW-0863">Zinc-finger</keyword>
<protein>
    <recommendedName>
        <fullName>Zinc finger C2HC domain-containing protein CBG14627</fullName>
    </recommendedName>
</protein>
<accession>Q618K0</accession>
<accession>A8XKB5</accession>
<name>ZC21A_CAEBR</name>
<feature type="chain" id="PRO_0000280254" description="Zinc finger C2HC domain-containing protein CBG14627">
    <location>
        <begin position="1"/>
        <end position="322"/>
    </location>
</feature>
<feature type="zinc finger region" description="C2HC/C3H-type 1" evidence="1">
    <location>
        <begin position="9"/>
        <end position="38"/>
    </location>
</feature>
<feature type="zinc finger region" description="C2HC/C3H-type 2" evidence="1">
    <location>
        <begin position="119"/>
        <end position="148"/>
    </location>
</feature>
<feature type="region of interest" description="Disordered" evidence="2">
    <location>
        <begin position="144"/>
        <end position="322"/>
    </location>
</feature>
<feature type="compositionally biased region" description="Polar residues" evidence="2">
    <location>
        <begin position="148"/>
        <end position="168"/>
    </location>
</feature>
<feature type="compositionally biased region" description="Basic and acidic residues" evidence="2">
    <location>
        <begin position="171"/>
        <end position="219"/>
    </location>
</feature>
<feature type="compositionally biased region" description="Polar residues" evidence="2">
    <location>
        <begin position="220"/>
        <end position="238"/>
    </location>
</feature>
<feature type="compositionally biased region" description="Low complexity" evidence="2">
    <location>
        <begin position="278"/>
        <end position="294"/>
    </location>
</feature>
<feature type="compositionally biased region" description="Basic and acidic residues" evidence="2">
    <location>
        <begin position="296"/>
        <end position="305"/>
    </location>
</feature>
<feature type="compositionally biased region" description="Low complexity" evidence="2">
    <location>
        <begin position="311"/>
        <end position="322"/>
    </location>
</feature>
<feature type="binding site" evidence="1">
    <location>
        <position position="13"/>
    </location>
    <ligand>
        <name>Zn(2+)</name>
        <dbReference type="ChEBI" id="CHEBI:29105"/>
        <label>1</label>
    </ligand>
</feature>
<feature type="binding site" evidence="1">
    <location>
        <position position="16"/>
    </location>
    <ligand>
        <name>Zn(2+)</name>
        <dbReference type="ChEBI" id="CHEBI:29105"/>
        <label>1</label>
    </ligand>
</feature>
<feature type="binding site" evidence="1">
    <location>
        <position position="28"/>
    </location>
    <ligand>
        <name>Zn(2+)</name>
        <dbReference type="ChEBI" id="CHEBI:29105"/>
        <label>1</label>
    </ligand>
</feature>
<feature type="binding site" evidence="1">
    <location>
        <position position="32"/>
    </location>
    <ligand>
        <name>Zn(2+)</name>
        <dbReference type="ChEBI" id="CHEBI:29105"/>
        <label>1</label>
    </ligand>
</feature>
<feature type="binding site" evidence="1">
    <location>
        <position position="123"/>
    </location>
    <ligand>
        <name>Zn(2+)</name>
        <dbReference type="ChEBI" id="CHEBI:29105"/>
        <label>2</label>
    </ligand>
</feature>
<feature type="binding site" evidence="1">
    <location>
        <position position="126"/>
    </location>
    <ligand>
        <name>Zn(2+)</name>
        <dbReference type="ChEBI" id="CHEBI:29105"/>
        <label>2</label>
    </ligand>
</feature>
<feature type="binding site" evidence="1">
    <location>
        <position position="138"/>
    </location>
    <ligand>
        <name>Zn(2+)</name>
        <dbReference type="ChEBI" id="CHEBI:29105"/>
        <label>2</label>
    </ligand>
</feature>
<feature type="binding site" evidence="1">
    <location>
        <position position="142"/>
    </location>
    <ligand>
        <name>Zn(2+)</name>
        <dbReference type="ChEBI" id="CHEBI:29105"/>
        <label>2</label>
    </ligand>
</feature>
<evidence type="ECO:0000255" key="1">
    <source>
        <dbReference type="PROSITE-ProRule" id="PRU01371"/>
    </source>
</evidence>
<evidence type="ECO:0000256" key="2">
    <source>
        <dbReference type="SAM" id="MobiDB-lite"/>
    </source>
</evidence>
<evidence type="ECO:0000305" key="3"/>
<sequence length="322" mass="35461">MDNADPNEPVYPCPICGRKFVKSSLEKHESACRKLATLHRKPFDSGKQRANGSDLTYAAIKKAQNEKAKNGGVFPRPQTNWRERHGNFIDAVSSSKRVDYALKTGAPLPPPPKTAVPSDYVQCEYCSRNFNAAAAERHIPFCREQTTRKQGGKSSAGNRGLTSNNYRSLPSKHEGRKQESSSRNGSAERKTTTRGRDGSLSRARRDDSNDLTNRRKSLETRSQLTTGQANNRTTSLSAGTRPALPPMTPSSKRSSSAKRDLPPNPTTHQRLKTPAPKTTTTASASRSGSGSSSRTRTRDESRESRLSQAKSNSRNNSRSRIF</sequence>
<proteinExistence type="inferred from homology"/>